<feature type="chain" id="PRO_0000064390" description="5'-nucleotidase">
    <location>
        <begin position="1"/>
        <end position="221"/>
    </location>
</feature>
<feature type="active site" description="Nucleophile" evidence="1">
    <location>
        <position position="14"/>
    </location>
</feature>
<reference key="1">
    <citation type="journal article" date="2000" name="Nature">
        <title>Complete genome sequence of Pseudomonas aeruginosa PAO1, an opportunistic pathogen.</title>
        <authorList>
            <person name="Stover C.K."/>
            <person name="Pham X.-Q.T."/>
            <person name="Erwin A.L."/>
            <person name="Mizoguchi S.D."/>
            <person name="Warrener P."/>
            <person name="Hickey M.J."/>
            <person name="Brinkman F.S.L."/>
            <person name="Hufnagle W.O."/>
            <person name="Kowalik D.J."/>
            <person name="Lagrou M."/>
            <person name="Garber R.L."/>
            <person name="Goltry L."/>
            <person name="Tolentino E."/>
            <person name="Westbrock-Wadman S."/>
            <person name="Yuan Y."/>
            <person name="Brody L.L."/>
            <person name="Coulter S.N."/>
            <person name="Folger K.R."/>
            <person name="Kas A."/>
            <person name="Larbig K."/>
            <person name="Lim R.M."/>
            <person name="Smith K.A."/>
            <person name="Spencer D.H."/>
            <person name="Wong G.K.-S."/>
            <person name="Wu Z."/>
            <person name="Paulsen I.T."/>
            <person name="Reizer J."/>
            <person name="Saier M.H. Jr."/>
            <person name="Hancock R.E.W."/>
            <person name="Lory S."/>
            <person name="Olson M.V."/>
        </authorList>
    </citation>
    <scope>NUCLEOTIDE SEQUENCE [LARGE SCALE GENOMIC DNA]</scope>
    <source>
        <strain>ATCC 15692 / DSM 22644 / CIP 104116 / JCM 14847 / LMG 12228 / 1C / PRS 101 / PAO1</strain>
    </source>
</reference>
<reference key="2">
    <citation type="journal article" date="2005" name="FEMS Microbiol. Rev.">
        <title>Enzyme genomics: application of general enzymatic screens to discover new enzymes.</title>
        <authorList>
            <person name="Kuznetsova E."/>
            <person name="Proudfoot M."/>
            <person name="Sanders S.A."/>
            <person name="Reinking J."/>
            <person name="Savchenko A."/>
            <person name="Arrowsmith C.H."/>
            <person name="Edwards A.M."/>
            <person name="Yakunin A.F."/>
        </authorList>
    </citation>
    <scope>FUNCTION</scope>
    <scope>COFACTOR</scope>
    <scope>BIOPHYSICOCHEMICAL PROPERTIES</scope>
</reference>
<evidence type="ECO:0000250" key="1"/>
<evidence type="ECO:0000269" key="2">
    <source>
    </source>
</evidence>
<evidence type="ECO:0000305" key="3"/>
<protein>
    <recommendedName>
        <fullName>5'-nucleotidase</fullName>
        <ecNumber>3.1.3.5</ecNumber>
    </recommendedName>
    <alternativeName>
        <fullName>Nucleoside 5'-monophosphate phosphohydrolase</fullName>
    </alternativeName>
</protein>
<gene>
    <name type="ordered locus">PA0065</name>
</gene>
<name>5NTD_PSEAE</name>
<keyword id="KW-0378">Hydrolase</keyword>
<keyword id="KW-0460">Magnesium</keyword>
<keyword id="KW-0464">Manganese</keyword>
<keyword id="KW-0479">Metal-binding</keyword>
<keyword id="KW-0547">Nucleotide-binding</keyword>
<keyword id="KW-1185">Reference proteome</keyword>
<accession>Q9I767</accession>
<dbReference type="EC" id="3.1.3.5"/>
<dbReference type="EMBL" id="AE004091">
    <property type="protein sequence ID" value="AAG03455.1"/>
    <property type="molecule type" value="Genomic_DNA"/>
</dbReference>
<dbReference type="PIR" id="C83636">
    <property type="entry name" value="C83636"/>
</dbReference>
<dbReference type="RefSeq" id="NP_248755.1">
    <property type="nucleotide sequence ID" value="NC_002516.2"/>
</dbReference>
<dbReference type="RefSeq" id="WP_003114659.1">
    <property type="nucleotide sequence ID" value="NZ_QZGE01000015.1"/>
</dbReference>
<dbReference type="SMR" id="Q9I767"/>
<dbReference type="STRING" id="208964.PA0065"/>
<dbReference type="PaxDb" id="208964-PA0065"/>
<dbReference type="GeneID" id="878495"/>
<dbReference type="KEGG" id="pae:PA0065"/>
<dbReference type="PATRIC" id="fig|208964.12.peg.68"/>
<dbReference type="PseudoCAP" id="PA0065"/>
<dbReference type="HOGENOM" id="CLU_045011_19_4_6"/>
<dbReference type="InParanoid" id="Q9I767"/>
<dbReference type="OrthoDB" id="9792518at2"/>
<dbReference type="PhylomeDB" id="Q9I767"/>
<dbReference type="BioCyc" id="PAER208964:G1FZ6-67-MONOMER"/>
<dbReference type="BRENDA" id="3.1.3.5">
    <property type="organism ID" value="5087"/>
</dbReference>
<dbReference type="Proteomes" id="UP000002438">
    <property type="component" value="Chromosome"/>
</dbReference>
<dbReference type="GO" id="GO:0005829">
    <property type="term" value="C:cytosol"/>
    <property type="evidence" value="ECO:0000318"/>
    <property type="project" value="GO_Central"/>
</dbReference>
<dbReference type="GO" id="GO:0008253">
    <property type="term" value="F:5'-nucleotidase activity"/>
    <property type="evidence" value="ECO:0007669"/>
    <property type="project" value="UniProtKB-EC"/>
</dbReference>
<dbReference type="GO" id="GO:0046872">
    <property type="term" value="F:metal ion binding"/>
    <property type="evidence" value="ECO:0007669"/>
    <property type="project" value="UniProtKB-KW"/>
</dbReference>
<dbReference type="GO" id="GO:0000166">
    <property type="term" value="F:nucleotide binding"/>
    <property type="evidence" value="ECO:0007669"/>
    <property type="project" value="UniProtKB-KW"/>
</dbReference>
<dbReference type="GO" id="GO:0004713">
    <property type="term" value="F:protein tyrosine kinase activity"/>
    <property type="evidence" value="ECO:0000318"/>
    <property type="project" value="GO_Central"/>
</dbReference>
<dbReference type="CDD" id="cd04302">
    <property type="entry name" value="HAD_5NT"/>
    <property type="match status" value="1"/>
</dbReference>
<dbReference type="FunFam" id="1.10.150.240:FF:000017">
    <property type="entry name" value="HAD family hydrolase"/>
    <property type="match status" value="1"/>
</dbReference>
<dbReference type="FunFam" id="3.40.50.1000:FF:000022">
    <property type="entry name" value="Phosphoglycolate phosphatase"/>
    <property type="match status" value="1"/>
</dbReference>
<dbReference type="Gene3D" id="3.40.50.1000">
    <property type="entry name" value="HAD superfamily/HAD-like"/>
    <property type="match status" value="1"/>
</dbReference>
<dbReference type="Gene3D" id="1.10.150.240">
    <property type="entry name" value="Putative phosphatase, domain 2"/>
    <property type="match status" value="1"/>
</dbReference>
<dbReference type="InterPro" id="IPR050155">
    <property type="entry name" value="HAD-like_hydrolase_sf"/>
</dbReference>
<dbReference type="InterPro" id="IPR036412">
    <property type="entry name" value="HAD-like_sf"/>
</dbReference>
<dbReference type="InterPro" id="IPR041492">
    <property type="entry name" value="HAD_2"/>
</dbReference>
<dbReference type="InterPro" id="IPR023214">
    <property type="entry name" value="HAD_sf"/>
</dbReference>
<dbReference type="InterPro" id="IPR023198">
    <property type="entry name" value="PGP-like_dom2"/>
</dbReference>
<dbReference type="PANTHER" id="PTHR43434:SF20">
    <property type="entry name" value="5'-NUCLEOTIDASE"/>
    <property type="match status" value="1"/>
</dbReference>
<dbReference type="PANTHER" id="PTHR43434">
    <property type="entry name" value="PHOSPHOGLYCOLATE PHOSPHATASE"/>
    <property type="match status" value="1"/>
</dbReference>
<dbReference type="Pfam" id="PF13419">
    <property type="entry name" value="HAD_2"/>
    <property type="match status" value="1"/>
</dbReference>
<dbReference type="SFLD" id="SFLDG01129">
    <property type="entry name" value="C1.5:_HAD__Beta-PGM__Phosphata"/>
    <property type="match status" value="1"/>
</dbReference>
<dbReference type="SFLD" id="SFLDS00003">
    <property type="entry name" value="Haloacid_Dehalogenase"/>
    <property type="match status" value="1"/>
</dbReference>
<dbReference type="SUPFAM" id="SSF56784">
    <property type="entry name" value="HAD-like"/>
    <property type="match status" value="1"/>
</dbReference>
<proteinExistence type="evidence at protein level"/>
<organism>
    <name type="scientific">Pseudomonas aeruginosa (strain ATCC 15692 / DSM 22644 / CIP 104116 / JCM 14847 / LMG 12228 / 1C / PRS 101 / PAO1)</name>
    <dbReference type="NCBI Taxonomy" id="208964"/>
    <lineage>
        <taxon>Bacteria</taxon>
        <taxon>Pseudomonadati</taxon>
        <taxon>Pseudomonadota</taxon>
        <taxon>Gammaproteobacteria</taxon>
        <taxon>Pseudomonadales</taxon>
        <taxon>Pseudomonadaceae</taxon>
        <taxon>Pseudomonas</taxon>
    </lineage>
</organism>
<comment type="function">
    <text evidence="2">Specifically dephosphorylates nucleoside 5'-monophosphates to nucleosides and inorganic phosphate. Displays high activity toward 5'-UMP and 5'-IMP, significant activity against 5'-XMP and 5'-TMP, and low activity against 5'-CMP.</text>
</comment>
<comment type="catalytic activity">
    <reaction>
        <text>a ribonucleoside 5'-phosphate + H2O = a ribonucleoside + phosphate</text>
        <dbReference type="Rhea" id="RHEA:12484"/>
        <dbReference type="ChEBI" id="CHEBI:15377"/>
        <dbReference type="ChEBI" id="CHEBI:18254"/>
        <dbReference type="ChEBI" id="CHEBI:43474"/>
        <dbReference type="ChEBI" id="CHEBI:58043"/>
        <dbReference type="EC" id="3.1.3.5"/>
    </reaction>
</comment>
<comment type="cofactor">
    <cofactor evidence="2">
        <name>Mn(2+)</name>
        <dbReference type="ChEBI" id="CHEBI:29035"/>
    </cofactor>
    <cofactor evidence="2">
        <name>Mg(2+)</name>
        <dbReference type="ChEBI" id="CHEBI:18420"/>
    </cofactor>
    <text evidence="2">Divalent metal cation. Prefers Mn(2+) over Mg(2+).</text>
</comment>
<comment type="biophysicochemical properties">
    <kinetics>
        <KM evidence="2">0.39 mM for 5'-UMP</KM>
        <Vmax evidence="2">3.14 umol/min/mg enzyme with 5'-UMP as substrate</Vmax>
    </kinetics>
    <phDependence>
        <text evidence="2">Optimum pH is 7.4.</text>
    </phDependence>
</comment>
<comment type="similarity">
    <text evidence="3">Belongs to the HAD-like hydrolase superfamily.</text>
</comment>
<sequence length="221" mass="24951">MRDAALRYPNILFDLDGTLTDPREGITRSVQFALARLGIDEPDLARLEHFIGPPLLQCFMQTYGFDEARAWEAVNHYRERFRVTGLYENRVFDGIPELLEALVGRGHTLYVATSKPGVFAREIARHFAFDRHFKAIYGSELDGTRTHKEELIRHLLDSEGLAAEHCLMIGDRMHDLLGASRNGVACIGVGYGFGSEDELRAHQPTHYCADLAALRQVLESH</sequence>